<sequence length="490" mass="54971">MVPVVALVGRPNVGKSTLFNRLTRTRDALVADFPGLTRDRKYGRAEVEGREFICIDTGGIDGTEDGVETRMAEQSLLAIEEADVVLFMVDARAGLMPADEAIAKHLRSREKPTFLVANKTDGLDPDQAVVDFYSLGLGEIYPIAASHGRGVLSLLEHVLLPWMDDVAPQEKVDEDAEYWAQFEAEQNGEEAPEDDFDPQSLPIKLAIVGRPNVGKSTLTNRILGEERVVVYDMPGTTRDSIYIPMERDEREYVLIDTAGVRKRGKITDAVEKFSVIKTLQAIEDANVVLLVIDAREGISDQDLSLLGFILNSGRSLVIVVNKWDGLSQEVKEQVKETLDFRLGFIDFARVHFISALHGSGVGNLFESVREAYDSSTRRVSTAMLTRIMTMAVEDHQPPLVRGRRVKLKYAHAGGYNPPIVVIHGNQVKDLPDSYKRYLMNYFRKSLEVMGTPIRIQFKEGENPYANKRNTLTPTQMRKRKRLMKHIKKSK</sequence>
<proteinExistence type="inferred from homology"/>
<evidence type="ECO:0000255" key="1">
    <source>
        <dbReference type="HAMAP-Rule" id="MF_00195"/>
    </source>
</evidence>
<protein>
    <recommendedName>
        <fullName evidence="1">GTPase Der</fullName>
    </recommendedName>
    <alternativeName>
        <fullName evidence="1">GTP-binding protein EngA</fullName>
    </alternativeName>
</protein>
<reference key="1">
    <citation type="journal article" date="2005" name="Nucleic Acids Res.">
        <title>The genome sequence of Salmonella enterica serovar Choleraesuis, a highly invasive and resistant zoonotic pathogen.</title>
        <authorList>
            <person name="Chiu C.-H."/>
            <person name="Tang P."/>
            <person name="Chu C."/>
            <person name="Hu S."/>
            <person name="Bao Q."/>
            <person name="Yu J."/>
            <person name="Chou Y.-Y."/>
            <person name="Wang H.-S."/>
            <person name="Lee Y.-S."/>
        </authorList>
    </citation>
    <scope>NUCLEOTIDE SEQUENCE [LARGE SCALE GENOMIC DNA]</scope>
    <source>
        <strain>SC-B67</strain>
    </source>
</reference>
<accession>Q57LJ0</accession>
<gene>
    <name evidence="1" type="primary">der</name>
    <name type="synonym">engA</name>
    <name type="ordered locus">SCH_2516</name>
</gene>
<comment type="function">
    <text evidence="1">GTPase that plays an essential role in the late steps of ribosome biogenesis.</text>
</comment>
<comment type="subunit">
    <text evidence="1">Associates with the 50S ribosomal subunit.</text>
</comment>
<comment type="similarity">
    <text evidence="1">Belongs to the TRAFAC class TrmE-Era-EngA-EngB-Septin-like GTPase superfamily. EngA (Der) GTPase family.</text>
</comment>
<keyword id="KW-0342">GTP-binding</keyword>
<keyword id="KW-0547">Nucleotide-binding</keyword>
<keyword id="KW-0677">Repeat</keyword>
<keyword id="KW-0690">Ribosome biogenesis</keyword>
<dbReference type="EMBL" id="AE017220">
    <property type="protein sequence ID" value="AAX66422.1"/>
    <property type="molecule type" value="Genomic_DNA"/>
</dbReference>
<dbReference type="RefSeq" id="WP_000249416.1">
    <property type="nucleotide sequence ID" value="NC_006905.1"/>
</dbReference>
<dbReference type="SMR" id="Q57LJ0"/>
<dbReference type="KEGG" id="sec:SCH_2516"/>
<dbReference type="HOGENOM" id="CLU_016077_6_2_6"/>
<dbReference type="Proteomes" id="UP000000538">
    <property type="component" value="Chromosome"/>
</dbReference>
<dbReference type="GO" id="GO:0005525">
    <property type="term" value="F:GTP binding"/>
    <property type="evidence" value="ECO:0007669"/>
    <property type="project" value="UniProtKB-UniRule"/>
</dbReference>
<dbReference type="GO" id="GO:0043022">
    <property type="term" value="F:ribosome binding"/>
    <property type="evidence" value="ECO:0007669"/>
    <property type="project" value="TreeGrafter"/>
</dbReference>
<dbReference type="GO" id="GO:0042254">
    <property type="term" value="P:ribosome biogenesis"/>
    <property type="evidence" value="ECO:0007669"/>
    <property type="project" value="UniProtKB-KW"/>
</dbReference>
<dbReference type="CDD" id="cd01894">
    <property type="entry name" value="EngA1"/>
    <property type="match status" value="1"/>
</dbReference>
<dbReference type="CDD" id="cd01895">
    <property type="entry name" value="EngA2"/>
    <property type="match status" value="1"/>
</dbReference>
<dbReference type="FunFam" id="3.30.300.20:FF:000004">
    <property type="entry name" value="GTPase Der"/>
    <property type="match status" value="1"/>
</dbReference>
<dbReference type="FunFam" id="3.40.50.300:FF:000040">
    <property type="entry name" value="GTPase Der"/>
    <property type="match status" value="1"/>
</dbReference>
<dbReference type="FunFam" id="3.40.50.300:FF:000057">
    <property type="entry name" value="GTPase Der"/>
    <property type="match status" value="1"/>
</dbReference>
<dbReference type="Gene3D" id="3.30.300.20">
    <property type="match status" value="1"/>
</dbReference>
<dbReference type="Gene3D" id="3.40.50.300">
    <property type="entry name" value="P-loop containing nucleotide triphosphate hydrolases"/>
    <property type="match status" value="2"/>
</dbReference>
<dbReference type="HAMAP" id="MF_00195">
    <property type="entry name" value="GTPase_Der"/>
    <property type="match status" value="1"/>
</dbReference>
<dbReference type="InterPro" id="IPR031166">
    <property type="entry name" value="G_ENGA"/>
</dbReference>
<dbReference type="InterPro" id="IPR006073">
    <property type="entry name" value="GTP-bd"/>
</dbReference>
<dbReference type="InterPro" id="IPR016484">
    <property type="entry name" value="GTPase_Der"/>
</dbReference>
<dbReference type="InterPro" id="IPR032859">
    <property type="entry name" value="KH_dom-like"/>
</dbReference>
<dbReference type="InterPro" id="IPR015946">
    <property type="entry name" value="KH_dom-like_a/b"/>
</dbReference>
<dbReference type="InterPro" id="IPR027417">
    <property type="entry name" value="P-loop_NTPase"/>
</dbReference>
<dbReference type="InterPro" id="IPR005225">
    <property type="entry name" value="Small_GTP-bd"/>
</dbReference>
<dbReference type="NCBIfam" id="TIGR03594">
    <property type="entry name" value="GTPase_EngA"/>
    <property type="match status" value="1"/>
</dbReference>
<dbReference type="NCBIfam" id="TIGR00231">
    <property type="entry name" value="small_GTP"/>
    <property type="match status" value="2"/>
</dbReference>
<dbReference type="PANTHER" id="PTHR43834">
    <property type="entry name" value="GTPASE DER"/>
    <property type="match status" value="1"/>
</dbReference>
<dbReference type="PANTHER" id="PTHR43834:SF6">
    <property type="entry name" value="GTPASE DER"/>
    <property type="match status" value="1"/>
</dbReference>
<dbReference type="Pfam" id="PF14714">
    <property type="entry name" value="KH_dom-like"/>
    <property type="match status" value="1"/>
</dbReference>
<dbReference type="Pfam" id="PF01926">
    <property type="entry name" value="MMR_HSR1"/>
    <property type="match status" value="2"/>
</dbReference>
<dbReference type="PIRSF" id="PIRSF006485">
    <property type="entry name" value="GTP-binding_EngA"/>
    <property type="match status" value="1"/>
</dbReference>
<dbReference type="PRINTS" id="PR00326">
    <property type="entry name" value="GTP1OBG"/>
</dbReference>
<dbReference type="SUPFAM" id="SSF52540">
    <property type="entry name" value="P-loop containing nucleoside triphosphate hydrolases"/>
    <property type="match status" value="2"/>
</dbReference>
<dbReference type="PROSITE" id="PS51712">
    <property type="entry name" value="G_ENGA"/>
    <property type="match status" value="2"/>
</dbReference>
<organism>
    <name type="scientific">Salmonella choleraesuis (strain SC-B67)</name>
    <dbReference type="NCBI Taxonomy" id="321314"/>
    <lineage>
        <taxon>Bacteria</taxon>
        <taxon>Pseudomonadati</taxon>
        <taxon>Pseudomonadota</taxon>
        <taxon>Gammaproteobacteria</taxon>
        <taxon>Enterobacterales</taxon>
        <taxon>Enterobacteriaceae</taxon>
        <taxon>Salmonella</taxon>
    </lineage>
</organism>
<name>DER_SALCH</name>
<feature type="chain" id="PRO_1000011729" description="GTPase Der">
    <location>
        <begin position="1"/>
        <end position="490"/>
    </location>
</feature>
<feature type="domain" description="EngA-type G 1">
    <location>
        <begin position="3"/>
        <end position="166"/>
    </location>
</feature>
<feature type="domain" description="EngA-type G 2">
    <location>
        <begin position="203"/>
        <end position="376"/>
    </location>
</feature>
<feature type="domain" description="KH-like" evidence="1">
    <location>
        <begin position="377"/>
        <end position="461"/>
    </location>
</feature>
<feature type="binding site" evidence="1">
    <location>
        <begin position="9"/>
        <end position="16"/>
    </location>
    <ligand>
        <name>GTP</name>
        <dbReference type="ChEBI" id="CHEBI:37565"/>
        <label>1</label>
    </ligand>
</feature>
<feature type="binding site" evidence="1">
    <location>
        <begin position="56"/>
        <end position="60"/>
    </location>
    <ligand>
        <name>GTP</name>
        <dbReference type="ChEBI" id="CHEBI:37565"/>
        <label>1</label>
    </ligand>
</feature>
<feature type="binding site" evidence="1">
    <location>
        <begin position="118"/>
        <end position="121"/>
    </location>
    <ligand>
        <name>GTP</name>
        <dbReference type="ChEBI" id="CHEBI:37565"/>
        <label>1</label>
    </ligand>
</feature>
<feature type="binding site" evidence="1">
    <location>
        <begin position="209"/>
        <end position="216"/>
    </location>
    <ligand>
        <name>GTP</name>
        <dbReference type="ChEBI" id="CHEBI:37565"/>
        <label>2</label>
    </ligand>
</feature>
<feature type="binding site" evidence="1">
    <location>
        <begin position="256"/>
        <end position="260"/>
    </location>
    <ligand>
        <name>GTP</name>
        <dbReference type="ChEBI" id="CHEBI:37565"/>
        <label>2</label>
    </ligand>
</feature>
<feature type="binding site" evidence="1">
    <location>
        <begin position="321"/>
        <end position="324"/>
    </location>
    <ligand>
        <name>GTP</name>
        <dbReference type="ChEBI" id="CHEBI:37565"/>
        <label>2</label>
    </ligand>
</feature>